<proteinExistence type="inferred from homology"/>
<organism>
    <name type="scientific">Ruegeria sp. (strain TM1040)</name>
    <name type="common">Silicibacter sp.</name>
    <dbReference type="NCBI Taxonomy" id="292414"/>
    <lineage>
        <taxon>Bacteria</taxon>
        <taxon>Pseudomonadati</taxon>
        <taxon>Pseudomonadota</taxon>
        <taxon>Alphaproteobacteria</taxon>
        <taxon>Rhodobacterales</taxon>
        <taxon>Roseobacteraceae</taxon>
        <taxon>Ruegeria</taxon>
    </lineage>
</organism>
<gene>
    <name evidence="1" type="primary">miaA</name>
    <name type="ordered locus">TM1040_1415</name>
</gene>
<comment type="function">
    <text evidence="1">Catalyzes the transfer of a dimethylallyl group onto the adenine at position 37 in tRNAs that read codons beginning with uridine, leading to the formation of N6-(dimethylallyl)adenosine (i(6)A).</text>
</comment>
<comment type="catalytic activity">
    <reaction evidence="1">
        <text>adenosine(37) in tRNA + dimethylallyl diphosphate = N(6)-dimethylallyladenosine(37) in tRNA + diphosphate</text>
        <dbReference type="Rhea" id="RHEA:26482"/>
        <dbReference type="Rhea" id="RHEA-COMP:10162"/>
        <dbReference type="Rhea" id="RHEA-COMP:10375"/>
        <dbReference type="ChEBI" id="CHEBI:33019"/>
        <dbReference type="ChEBI" id="CHEBI:57623"/>
        <dbReference type="ChEBI" id="CHEBI:74411"/>
        <dbReference type="ChEBI" id="CHEBI:74415"/>
        <dbReference type="EC" id="2.5.1.75"/>
    </reaction>
</comment>
<comment type="cofactor">
    <cofactor evidence="1">
        <name>Mg(2+)</name>
        <dbReference type="ChEBI" id="CHEBI:18420"/>
    </cofactor>
</comment>
<comment type="subunit">
    <text evidence="1">Monomer.</text>
</comment>
<comment type="similarity">
    <text evidence="1">Belongs to the IPP transferase family.</text>
</comment>
<dbReference type="EC" id="2.5.1.75" evidence="1"/>
<dbReference type="EMBL" id="CP000377">
    <property type="protein sequence ID" value="ABF64148.1"/>
    <property type="molecule type" value="Genomic_DNA"/>
</dbReference>
<dbReference type="SMR" id="Q1GGR8"/>
<dbReference type="STRING" id="292414.TM1040_1415"/>
<dbReference type="KEGG" id="sit:TM1040_1415"/>
<dbReference type="eggNOG" id="COG0324">
    <property type="taxonomic scope" value="Bacteria"/>
</dbReference>
<dbReference type="HOGENOM" id="CLU_032616_0_1_5"/>
<dbReference type="Proteomes" id="UP000000636">
    <property type="component" value="Chromosome"/>
</dbReference>
<dbReference type="GO" id="GO:0005524">
    <property type="term" value="F:ATP binding"/>
    <property type="evidence" value="ECO:0007669"/>
    <property type="project" value="UniProtKB-UniRule"/>
</dbReference>
<dbReference type="GO" id="GO:0052381">
    <property type="term" value="F:tRNA dimethylallyltransferase activity"/>
    <property type="evidence" value="ECO:0007669"/>
    <property type="project" value="UniProtKB-UniRule"/>
</dbReference>
<dbReference type="GO" id="GO:0006400">
    <property type="term" value="P:tRNA modification"/>
    <property type="evidence" value="ECO:0007669"/>
    <property type="project" value="TreeGrafter"/>
</dbReference>
<dbReference type="Gene3D" id="1.10.20.140">
    <property type="match status" value="1"/>
</dbReference>
<dbReference type="Gene3D" id="3.40.50.300">
    <property type="entry name" value="P-loop containing nucleotide triphosphate hydrolases"/>
    <property type="match status" value="1"/>
</dbReference>
<dbReference type="HAMAP" id="MF_00185">
    <property type="entry name" value="IPP_trans"/>
    <property type="match status" value="1"/>
</dbReference>
<dbReference type="InterPro" id="IPR039657">
    <property type="entry name" value="Dimethylallyltransferase"/>
</dbReference>
<dbReference type="InterPro" id="IPR018022">
    <property type="entry name" value="IPT"/>
</dbReference>
<dbReference type="InterPro" id="IPR027417">
    <property type="entry name" value="P-loop_NTPase"/>
</dbReference>
<dbReference type="NCBIfam" id="TIGR00174">
    <property type="entry name" value="miaA"/>
    <property type="match status" value="1"/>
</dbReference>
<dbReference type="PANTHER" id="PTHR11088">
    <property type="entry name" value="TRNA DIMETHYLALLYLTRANSFERASE"/>
    <property type="match status" value="1"/>
</dbReference>
<dbReference type="PANTHER" id="PTHR11088:SF60">
    <property type="entry name" value="TRNA DIMETHYLALLYLTRANSFERASE"/>
    <property type="match status" value="1"/>
</dbReference>
<dbReference type="Pfam" id="PF01715">
    <property type="entry name" value="IPPT"/>
    <property type="match status" value="1"/>
</dbReference>
<dbReference type="SUPFAM" id="SSF52540">
    <property type="entry name" value="P-loop containing nucleoside triphosphate hydrolases"/>
    <property type="match status" value="2"/>
</dbReference>
<name>MIAA_RUEST</name>
<protein>
    <recommendedName>
        <fullName evidence="1">tRNA dimethylallyltransferase</fullName>
        <ecNumber evidence="1">2.5.1.75</ecNumber>
    </recommendedName>
    <alternativeName>
        <fullName evidence="1">Dimethylallyl diphosphate:tRNA dimethylallyltransferase</fullName>
        <shortName evidence="1">DMAPP:tRNA dimethylallyltransferase</shortName>
        <shortName evidence="1">DMATase</shortName>
    </alternativeName>
    <alternativeName>
        <fullName evidence="1">Isopentenyl-diphosphate:tRNA isopentenyltransferase</fullName>
        <shortName evidence="1">IPP transferase</shortName>
        <shortName evidence="1">IPPT</shortName>
        <shortName evidence="1">IPTase</shortName>
    </alternativeName>
</protein>
<sequence>MLDIDKIPADQPVLIAGPTASGKSELALRIAEHSGGVIVNADASQVYDCWRVVTARPSAEDESRAAHALYGHLSYDTLYSAGHWLRDVTPLLKGTKRPIIVGGTGLYFLTLTEGMADIPATPPEVRAEADTLSLETLAADLDPETRARIDMQNRARVQRAWEVLRATGRPLAEWQDDTPPPLLPAKDCTALVVEAERDWLETRIRRRFSMMIAQGALEEARAMQDRYDPALPSCKAIGVPELMAHLSGALTLEQAEERASVATRQYAKRQRTWFRARMKSWQRVSPQA</sequence>
<keyword id="KW-0067">ATP-binding</keyword>
<keyword id="KW-0460">Magnesium</keyword>
<keyword id="KW-0547">Nucleotide-binding</keyword>
<keyword id="KW-1185">Reference proteome</keyword>
<keyword id="KW-0808">Transferase</keyword>
<keyword id="KW-0819">tRNA processing</keyword>
<evidence type="ECO:0000255" key="1">
    <source>
        <dbReference type="HAMAP-Rule" id="MF_00185"/>
    </source>
</evidence>
<feature type="chain" id="PRO_0000377325" description="tRNA dimethylallyltransferase">
    <location>
        <begin position="1"/>
        <end position="288"/>
    </location>
</feature>
<feature type="binding site" evidence="1">
    <location>
        <begin position="17"/>
        <end position="24"/>
    </location>
    <ligand>
        <name>ATP</name>
        <dbReference type="ChEBI" id="CHEBI:30616"/>
    </ligand>
</feature>
<feature type="binding site" evidence="1">
    <location>
        <begin position="19"/>
        <end position="24"/>
    </location>
    <ligand>
        <name>substrate</name>
    </ligand>
</feature>
<feature type="site" description="Interaction with substrate tRNA" evidence="1">
    <location>
        <position position="104"/>
    </location>
</feature>
<feature type="site" description="Interaction with substrate tRNA" evidence="1">
    <location>
        <position position="126"/>
    </location>
</feature>
<reference key="1">
    <citation type="submission" date="2006-05" db="EMBL/GenBank/DDBJ databases">
        <title>Complete sequence of chromosome of Silicibacter sp. TM1040.</title>
        <authorList>
            <consortium name="US DOE Joint Genome Institute"/>
            <person name="Copeland A."/>
            <person name="Lucas S."/>
            <person name="Lapidus A."/>
            <person name="Barry K."/>
            <person name="Detter J.C."/>
            <person name="Glavina del Rio T."/>
            <person name="Hammon N."/>
            <person name="Israni S."/>
            <person name="Dalin E."/>
            <person name="Tice H."/>
            <person name="Pitluck S."/>
            <person name="Brettin T."/>
            <person name="Bruce D."/>
            <person name="Han C."/>
            <person name="Tapia R."/>
            <person name="Goodwin L."/>
            <person name="Thompson L.S."/>
            <person name="Gilna P."/>
            <person name="Schmutz J."/>
            <person name="Larimer F."/>
            <person name="Land M."/>
            <person name="Hauser L."/>
            <person name="Kyrpides N."/>
            <person name="Kim E."/>
            <person name="Belas R."/>
            <person name="Moran M.A."/>
            <person name="Buchan A."/>
            <person name="Gonzalez J.M."/>
            <person name="Schell M.A."/>
            <person name="Sun F."/>
            <person name="Richardson P."/>
        </authorList>
    </citation>
    <scope>NUCLEOTIDE SEQUENCE [LARGE SCALE GENOMIC DNA]</scope>
    <source>
        <strain>TM1040</strain>
    </source>
</reference>
<accession>Q1GGR8</accession>